<keyword id="KW-0067">ATP-binding</keyword>
<keyword id="KW-0963">Cytoplasm</keyword>
<keyword id="KW-0324">Glycolysis</keyword>
<keyword id="KW-0418">Kinase</keyword>
<keyword id="KW-0547">Nucleotide-binding</keyword>
<keyword id="KW-1185">Reference proteome</keyword>
<keyword id="KW-0808">Transferase</keyword>
<proteinExistence type="inferred from homology"/>
<sequence length="405" mass="42525">MAFKTLDDLLAEGVSGRHVLVRSDFNVPLDDEGNITDSGRITASLPTIKALIEGGAKVILSAHLGRPKGEVNPKYSLAPVAEALSEALDQYVALAGDVSGEDAHERANGLNDGDVLLLENVRFDPRETSKDEAERGTFADELVALAADNGAFVSDGFGVVHRAQASVYDVAKRLPAYAGKLVQKEVETLAAVAEKPEHPYVVVLGGAKVSDKLGVIEALAGKADKVIIGGGMCYTLLAAQGYNVQDSLLQEDQIDNCKELLERFGDKIVLPVDLVAATEFDAQAENKVVALDGIPEGWQSLDIGPESVKKFDEVIASSKTVFWNGPMGVFEMEAFSKGTAGVAQSIIDATAKNGSFTVVGGGDSAASVRLLGLDEEGFSHISTGGGASLEFLEGKELPGVKVLEA</sequence>
<feature type="chain" id="PRO_1000192820" description="Phosphoglycerate kinase">
    <location>
        <begin position="1"/>
        <end position="405"/>
    </location>
</feature>
<feature type="binding site" evidence="1">
    <location>
        <begin position="24"/>
        <end position="26"/>
    </location>
    <ligand>
        <name>substrate</name>
    </ligand>
</feature>
<feature type="binding site" evidence="1">
    <location>
        <position position="40"/>
    </location>
    <ligand>
        <name>substrate</name>
    </ligand>
</feature>
<feature type="binding site" evidence="1">
    <location>
        <begin position="63"/>
        <end position="66"/>
    </location>
    <ligand>
        <name>substrate</name>
    </ligand>
</feature>
<feature type="binding site" evidence="1">
    <location>
        <position position="122"/>
    </location>
    <ligand>
        <name>substrate</name>
    </ligand>
</feature>
<feature type="binding site" evidence="1">
    <location>
        <position position="162"/>
    </location>
    <ligand>
        <name>substrate</name>
    </ligand>
</feature>
<feature type="binding site" evidence="1">
    <location>
        <position position="212"/>
    </location>
    <ligand>
        <name>ATP</name>
        <dbReference type="ChEBI" id="CHEBI:30616"/>
    </ligand>
</feature>
<feature type="binding site" evidence="1">
    <location>
        <position position="331"/>
    </location>
    <ligand>
        <name>ATP</name>
        <dbReference type="ChEBI" id="CHEBI:30616"/>
    </ligand>
</feature>
<feature type="binding site" evidence="1">
    <location>
        <begin position="361"/>
        <end position="364"/>
    </location>
    <ligand>
        <name>ATP</name>
        <dbReference type="ChEBI" id="CHEBI:30616"/>
    </ligand>
</feature>
<protein>
    <recommendedName>
        <fullName evidence="1">Phosphoglycerate kinase</fullName>
        <ecNumber evidence="1">2.7.2.3</ecNumber>
    </recommendedName>
</protein>
<gene>
    <name evidence="1" type="primary">pgk</name>
    <name type="ordered locus">cauri_1201</name>
</gene>
<accession>C3PG40</accession>
<organism>
    <name type="scientific">Corynebacterium aurimucosum (strain ATCC 700975 / DSM 44827 / CIP 107346 / CN-1)</name>
    <name type="common">Corynebacterium nigricans</name>
    <dbReference type="NCBI Taxonomy" id="548476"/>
    <lineage>
        <taxon>Bacteria</taxon>
        <taxon>Bacillati</taxon>
        <taxon>Actinomycetota</taxon>
        <taxon>Actinomycetes</taxon>
        <taxon>Mycobacteriales</taxon>
        <taxon>Corynebacteriaceae</taxon>
        <taxon>Corynebacterium</taxon>
    </lineage>
</organism>
<name>PGK_CORA7</name>
<reference key="1">
    <citation type="journal article" date="2010" name="BMC Genomics">
        <title>Complete genome sequence and lifestyle of black-pigmented Corynebacterium aurimucosum ATCC 700975 (formerly C. nigricans CN-1) isolated from a vaginal swab of a woman with spontaneous abortion.</title>
        <authorList>
            <person name="Trost E."/>
            <person name="Gotker S."/>
            <person name="Schneider J."/>
            <person name="Schneiker-Bekel S."/>
            <person name="Szczepanowski R."/>
            <person name="Tilker A."/>
            <person name="Viehoever P."/>
            <person name="Arnold W."/>
            <person name="Bekel T."/>
            <person name="Blom J."/>
            <person name="Gartemann K.H."/>
            <person name="Linke B."/>
            <person name="Goesmann A."/>
            <person name="Puhler A."/>
            <person name="Shukla S.K."/>
            <person name="Tauch A."/>
        </authorList>
    </citation>
    <scope>NUCLEOTIDE SEQUENCE [LARGE SCALE GENOMIC DNA]</scope>
    <source>
        <strain>ATCC 700975 / DSM 44827 / CIP 107346 / CN-1</strain>
    </source>
</reference>
<dbReference type="EC" id="2.7.2.3" evidence="1"/>
<dbReference type="EMBL" id="CP001601">
    <property type="protein sequence ID" value="ACP32794.1"/>
    <property type="molecule type" value="Genomic_DNA"/>
</dbReference>
<dbReference type="RefSeq" id="WP_010186765.1">
    <property type="nucleotide sequence ID" value="NC_012590.1"/>
</dbReference>
<dbReference type="SMR" id="C3PG40"/>
<dbReference type="STRING" id="548476.cauri_1201"/>
<dbReference type="GeneID" id="31923824"/>
<dbReference type="KEGG" id="car:cauri_1201"/>
<dbReference type="eggNOG" id="COG0126">
    <property type="taxonomic scope" value="Bacteria"/>
</dbReference>
<dbReference type="HOGENOM" id="CLU_025427_0_2_11"/>
<dbReference type="OrthoDB" id="9808460at2"/>
<dbReference type="UniPathway" id="UPA00109">
    <property type="reaction ID" value="UER00185"/>
</dbReference>
<dbReference type="Proteomes" id="UP000002077">
    <property type="component" value="Chromosome"/>
</dbReference>
<dbReference type="GO" id="GO:0005829">
    <property type="term" value="C:cytosol"/>
    <property type="evidence" value="ECO:0007669"/>
    <property type="project" value="TreeGrafter"/>
</dbReference>
<dbReference type="GO" id="GO:0043531">
    <property type="term" value="F:ADP binding"/>
    <property type="evidence" value="ECO:0007669"/>
    <property type="project" value="TreeGrafter"/>
</dbReference>
<dbReference type="GO" id="GO:0005524">
    <property type="term" value="F:ATP binding"/>
    <property type="evidence" value="ECO:0007669"/>
    <property type="project" value="UniProtKB-KW"/>
</dbReference>
<dbReference type="GO" id="GO:0004618">
    <property type="term" value="F:phosphoglycerate kinase activity"/>
    <property type="evidence" value="ECO:0007669"/>
    <property type="project" value="UniProtKB-UniRule"/>
</dbReference>
<dbReference type="GO" id="GO:0006094">
    <property type="term" value="P:gluconeogenesis"/>
    <property type="evidence" value="ECO:0007669"/>
    <property type="project" value="TreeGrafter"/>
</dbReference>
<dbReference type="GO" id="GO:0006096">
    <property type="term" value="P:glycolytic process"/>
    <property type="evidence" value="ECO:0007669"/>
    <property type="project" value="UniProtKB-UniRule"/>
</dbReference>
<dbReference type="CDD" id="cd00318">
    <property type="entry name" value="Phosphoglycerate_kinase"/>
    <property type="match status" value="1"/>
</dbReference>
<dbReference type="FunFam" id="3.40.50.1260:FF:000003">
    <property type="entry name" value="Phosphoglycerate kinase"/>
    <property type="match status" value="1"/>
</dbReference>
<dbReference type="FunFam" id="3.40.50.1260:FF:000006">
    <property type="entry name" value="Phosphoglycerate kinase"/>
    <property type="match status" value="1"/>
</dbReference>
<dbReference type="Gene3D" id="3.40.50.1260">
    <property type="entry name" value="Phosphoglycerate kinase, N-terminal domain"/>
    <property type="match status" value="2"/>
</dbReference>
<dbReference type="HAMAP" id="MF_00145">
    <property type="entry name" value="Phosphoglyc_kinase"/>
    <property type="match status" value="1"/>
</dbReference>
<dbReference type="InterPro" id="IPR001576">
    <property type="entry name" value="Phosphoglycerate_kinase"/>
</dbReference>
<dbReference type="InterPro" id="IPR015911">
    <property type="entry name" value="Phosphoglycerate_kinase_CS"/>
</dbReference>
<dbReference type="InterPro" id="IPR015824">
    <property type="entry name" value="Phosphoglycerate_kinase_N"/>
</dbReference>
<dbReference type="InterPro" id="IPR036043">
    <property type="entry name" value="Phosphoglycerate_kinase_sf"/>
</dbReference>
<dbReference type="PANTHER" id="PTHR11406">
    <property type="entry name" value="PHOSPHOGLYCERATE KINASE"/>
    <property type="match status" value="1"/>
</dbReference>
<dbReference type="PANTHER" id="PTHR11406:SF23">
    <property type="entry name" value="PHOSPHOGLYCERATE KINASE 1, CHLOROPLASTIC-RELATED"/>
    <property type="match status" value="1"/>
</dbReference>
<dbReference type="Pfam" id="PF00162">
    <property type="entry name" value="PGK"/>
    <property type="match status" value="1"/>
</dbReference>
<dbReference type="PIRSF" id="PIRSF000724">
    <property type="entry name" value="Pgk"/>
    <property type="match status" value="1"/>
</dbReference>
<dbReference type="PRINTS" id="PR00477">
    <property type="entry name" value="PHGLYCKINASE"/>
</dbReference>
<dbReference type="SUPFAM" id="SSF53748">
    <property type="entry name" value="Phosphoglycerate kinase"/>
    <property type="match status" value="1"/>
</dbReference>
<dbReference type="PROSITE" id="PS00111">
    <property type="entry name" value="PGLYCERATE_KINASE"/>
    <property type="match status" value="1"/>
</dbReference>
<evidence type="ECO:0000255" key="1">
    <source>
        <dbReference type="HAMAP-Rule" id="MF_00145"/>
    </source>
</evidence>
<comment type="catalytic activity">
    <reaction evidence="1">
        <text>(2R)-3-phosphoglycerate + ATP = (2R)-3-phospho-glyceroyl phosphate + ADP</text>
        <dbReference type="Rhea" id="RHEA:14801"/>
        <dbReference type="ChEBI" id="CHEBI:30616"/>
        <dbReference type="ChEBI" id="CHEBI:57604"/>
        <dbReference type="ChEBI" id="CHEBI:58272"/>
        <dbReference type="ChEBI" id="CHEBI:456216"/>
        <dbReference type="EC" id="2.7.2.3"/>
    </reaction>
</comment>
<comment type="pathway">
    <text evidence="1">Carbohydrate degradation; glycolysis; pyruvate from D-glyceraldehyde 3-phosphate: step 2/5.</text>
</comment>
<comment type="subunit">
    <text evidence="1">Monomer.</text>
</comment>
<comment type="subcellular location">
    <subcellularLocation>
        <location evidence="1">Cytoplasm</location>
    </subcellularLocation>
</comment>
<comment type="similarity">
    <text evidence="1">Belongs to the phosphoglycerate kinase family.</text>
</comment>